<dbReference type="EMBL" id="Z28208">
    <property type="protein sequence ID" value="CAA82053.1"/>
    <property type="molecule type" value="Genomic_DNA"/>
</dbReference>
<dbReference type="EMBL" id="AY558395">
    <property type="protein sequence ID" value="AAS56721.1"/>
    <property type="molecule type" value="Genomic_DNA"/>
</dbReference>
<dbReference type="EMBL" id="BK006944">
    <property type="protein sequence ID" value="DAA08961.1"/>
    <property type="molecule type" value="Genomic_DNA"/>
</dbReference>
<dbReference type="PIR" id="S38046">
    <property type="entry name" value="S38046"/>
</dbReference>
<dbReference type="RefSeq" id="NP_012714.1">
    <property type="nucleotide sequence ID" value="NM_001179773.1"/>
</dbReference>
<dbReference type="SMR" id="P36038"/>
<dbReference type="BioGRID" id="33958">
    <property type="interactions" value="294"/>
</dbReference>
<dbReference type="DIP" id="DIP-3855N"/>
<dbReference type="FunCoup" id="P36038">
    <property type="interactions" value="43"/>
</dbReference>
<dbReference type="STRING" id="4932.YKL208W"/>
<dbReference type="iPTMnet" id="P36038"/>
<dbReference type="PaxDb" id="4932-YKL208W"/>
<dbReference type="PeptideAtlas" id="P36038"/>
<dbReference type="EnsemblFungi" id="YKL208W_mRNA">
    <property type="protein sequence ID" value="YKL208W"/>
    <property type="gene ID" value="YKL208W"/>
</dbReference>
<dbReference type="GeneID" id="853673"/>
<dbReference type="KEGG" id="sce:YKL208W"/>
<dbReference type="AGR" id="SGD:S000001691"/>
<dbReference type="SGD" id="S000001691">
    <property type="gene designation" value="CBT1"/>
</dbReference>
<dbReference type="VEuPathDB" id="FungiDB:YKL208W"/>
<dbReference type="eggNOG" id="ENOG502S6VE">
    <property type="taxonomic scope" value="Eukaryota"/>
</dbReference>
<dbReference type="HOGENOM" id="CLU_090080_0_0_1"/>
<dbReference type="InParanoid" id="P36038"/>
<dbReference type="OMA" id="DYYWNLF"/>
<dbReference type="OrthoDB" id="4036068at2759"/>
<dbReference type="BioCyc" id="YEAST:G3O-31967-MONOMER"/>
<dbReference type="BioGRID-ORCS" id="853673">
    <property type="hits" value="3 hits in 10 CRISPR screens"/>
</dbReference>
<dbReference type="PRO" id="PR:P36038"/>
<dbReference type="Proteomes" id="UP000002311">
    <property type="component" value="Chromosome XI"/>
</dbReference>
<dbReference type="RNAct" id="P36038">
    <property type="molecule type" value="protein"/>
</dbReference>
<dbReference type="GO" id="GO:0005739">
    <property type="term" value="C:mitochondrion"/>
    <property type="evidence" value="ECO:0007005"/>
    <property type="project" value="SGD"/>
</dbReference>
<dbReference type="GO" id="GO:0017004">
    <property type="term" value="P:cytochrome complex assembly"/>
    <property type="evidence" value="ECO:0000314"/>
    <property type="project" value="SGD"/>
</dbReference>
<dbReference type="GO" id="GO:0006397">
    <property type="term" value="P:mRNA processing"/>
    <property type="evidence" value="ECO:0000314"/>
    <property type="project" value="SGD"/>
</dbReference>
<dbReference type="GO" id="GO:0048255">
    <property type="term" value="P:mRNA stabilization"/>
    <property type="evidence" value="ECO:0000315"/>
    <property type="project" value="SGD"/>
</dbReference>
<dbReference type="GO" id="GO:0006364">
    <property type="term" value="P:rRNA processing"/>
    <property type="evidence" value="ECO:0007669"/>
    <property type="project" value="UniProtKB-KW"/>
</dbReference>
<accession>P36038</accession>
<accession>D6VWZ5</accession>
<accession>Q6Q574</accession>
<proteinExistence type="evidence at protein level"/>
<protein>
    <recommendedName>
        <fullName>Cytochrome b termination protein 1</fullName>
    </recommendedName>
</protein>
<reference key="1">
    <citation type="journal article" date="1994" name="Nature">
        <title>Complete DNA sequence of yeast chromosome XI.</title>
        <authorList>
            <person name="Dujon B."/>
            <person name="Alexandraki D."/>
            <person name="Andre B."/>
            <person name="Ansorge W."/>
            <person name="Baladron V."/>
            <person name="Ballesta J.P.G."/>
            <person name="Banrevi A."/>
            <person name="Bolle P.-A."/>
            <person name="Bolotin-Fukuhara M."/>
            <person name="Bossier P."/>
            <person name="Bou G."/>
            <person name="Boyer J."/>
            <person name="Buitrago M.J."/>
            <person name="Cheret G."/>
            <person name="Colleaux L."/>
            <person name="Daignan-Fornier B."/>
            <person name="del Rey F."/>
            <person name="Dion C."/>
            <person name="Domdey H."/>
            <person name="Duesterhoeft A."/>
            <person name="Duesterhus S."/>
            <person name="Entian K.-D."/>
            <person name="Erfle H."/>
            <person name="Esteban P.F."/>
            <person name="Feldmann H."/>
            <person name="Fernandes L."/>
            <person name="Fobo G.M."/>
            <person name="Fritz C."/>
            <person name="Fukuhara H."/>
            <person name="Gabel C."/>
            <person name="Gaillon L."/>
            <person name="Garcia-Cantalejo J.M."/>
            <person name="Garcia-Ramirez J.J."/>
            <person name="Gent M.E."/>
            <person name="Ghazvini M."/>
            <person name="Goffeau A."/>
            <person name="Gonzalez A."/>
            <person name="Grothues D."/>
            <person name="Guerreiro P."/>
            <person name="Hegemann J.H."/>
            <person name="Hewitt N."/>
            <person name="Hilger F."/>
            <person name="Hollenberg C.P."/>
            <person name="Horaitis O."/>
            <person name="Indge K.J."/>
            <person name="Jacquier A."/>
            <person name="James C.M."/>
            <person name="Jauniaux J.-C."/>
            <person name="Jimenez A."/>
            <person name="Keuchel H."/>
            <person name="Kirchrath L."/>
            <person name="Kleine K."/>
            <person name="Koetter P."/>
            <person name="Legrain P."/>
            <person name="Liebl S."/>
            <person name="Louis E.J."/>
            <person name="Maia e Silva A."/>
            <person name="Marck C."/>
            <person name="Monnier A.-L."/>
            <person name="Moestl D."/>
            <person name="Mueller S."/>
            <person name="Obermaier B."/>
            <person name="Oliver S.G."/>
            <person name="Pallier C."/>
            <person name="Pascolo S."/>
            <person name="Pfeiffer F."/>
            <person name="Philippsen P."/>
            <person name="Planta R.J."/>
            <person name="Pohl F.M."/>
            <person name="Pohl T.M."/>
            <person name="Poehlmann R."/>
            <person name="Portetelle D."/>
            <person name="Purnelle B."/>
            <person name="Puzos V."/>
            <person name="Ramezani Rad M."/>
            <person name="Rasmussen S.W."/>
            <person name="Remacha M.A."/>
            <person name="Revuelta J.L."/>
            <person name="Richard G.-F."/>
            <person name="Rieger M."/>
            <person name="Rodrigues-Pousada C."/>
            <person name="Rose M."/>
            <person name="Rupp T."/>
            <person name="Santos M.A."/>
            <person name="Schwager C."/>
            <person name="Sensen C."/>
            <person name="Skala J."/>
            <person name="Soares H."/>
            <person name="Sor F."/>
            <person name="Stegemann J."/>
            <person name="Tettelin H."/>
            <person name="Thierry A."/>
            <person name="Tzermia M."/>
            <person name="Urrestarazu L.A."/>
            <person name="van Dyck L."/>
            <person name="van Vliet-Reedijk J.C."/>
            <person name="Valens M."/>
            <person name="Vandenbol M."/>
            <person name="Vilela C."/>
            <person name="Vissers S."/>
            <person name="von Wettstein D."/>
            <person name="Voss H."/>
            <person name="Wiemann S."/>
            <person name="Xu G."/>
            <person name="Zimmermann J."/>
            <person name="Haasemann M."/>
            <person name="Becker I."/>
            <person name="Mewes H.-W."/>
        </authorList>
    </citation>
    <scope>NUCLEOTIDE SEQUENCE [LARGE SCALE GENOMIC DNA]</scope>
    <source>
        <strain>ATCC 204508 / S288c</strain>
    </source>
</reference>
<reference key="2">
    <citation type="journal article" date="2014" name="G3 (Bethesda)">
        <title>The reference genome sequence of Saccharomyces cerevisiae: Then and now.</title>
        <authorList>
            <person name="Engel S.R."/>
            <person name="Dietrich F.S."/>
            <person name="Fisk D.G."/>
            <person name="Binkley G."/>
            <person name="Balakrishnan R."/>
            <person name="Costanzo M.C."/>
            <person name="Dwight S.S."/>
            <person name="Hitz B.C."/>
            <person name="Karra K."/>
            <person name="Nash R.S."/>
            <person name="Weng S."/>
            <person name="Wong E.D."/>
            <person name="Lloyd P."/>
            <person name="Skrzypek M.S."/>
            <person name="Miyasato S.R."/>
            <person name="Simison M."/>
            <person name="Cherry J.M."/>
        </authorList>
    </citation>
    <scope>GENOME REANNOTATION</scope>
    <source>
        <strain>ATCC 204508 / S288c</strain>
    </source>
</reference>
<reference key="3">
    <citation type="journal article" date="2007" name="Genome Res.">
        <title>Approaching a complete repository of sequence-verified protein-encoding clones for Saccharomyces cerevisiae.</title>
        <authorList>
            <person name="Hu Y."/>
            <person name="Rolfs A."/>
            <person name="Bhullar B."/>
            <person name="Murthy T.V.S."/>
            <person name="Zhu C."/>
            <person name="Berger M.F."/>
            <person name="Camargo A.A."/>
            <person name="Kelley F."/>
            <person name="McCarron S."/>
            <person name="Jepson D."/>
            <person name="Richardson A."/>
            <person name="Raphael J."/>
            <person name="Moreira D."/>
            <person name="Taycher E."/>
            <person name="Zuo D."/>
            <person name="Mohr S."/>
            <person name="Kane M.F."/>
            <person name="Williamson J."/>
            <person name="Simpson A.J.G."/>
            <person name="Bulyk M.L."/>
            <person name="Harlow E."/>
            <person name="Marsischky G."/>
            <person name="Kolodner R.D."/>
            <person name="LaBaer J."/>
        </authorList>
    </citation>
    <scope>NUCLEOTIDE SEQUENCE [GENOMIC DNA]</scope>
    <source>
        <strain>ATCC 204508 / S288c</strain>
    </source>
</reference>
<reference key="4">
    <citation type="journal article" date="1994" name="Genetics">
        <title>Suppressor analyses of temperature-sensitive cbp1 strains of Saccharomyces cerevisiae: the product of the nuclear gene SOC1 affects mitochondrial cytochrome b mRNA post-transcriptionally.</title>
        <authorList>
            <person name="Staples R.R."/>
            <person name="Dieckmann C.L."/>
        </authorList>
    </citation>
    <scope>FUNCTION</scope>
</reference>
<reference key="5">
    <citation type="journal article" date="1997" name="Curr. Genet.">
        <title>A novel nuclear gene, CBT1, essential for mitochondrial cytochrome b formation: terminal processing of mRNA and intron dependence.</title>
        <authorList>
            <person name="Rieger K.-J."/>
            <person name="Aljinovic G."/>
            <person name="Lazowska J."/>
            <person name="Pohl T.M."/>
            <person name="Slonimski P.P."/>
            <person name="Aljinovic G."/>
        </authorList>
    </citation>
    <scope>FUNCTION</scope>
</reference>
<reference key="6">
    <citation type="journal article" date="1999" name="Genetics">
        <title>Suppressor analysis of mutations in the 5'-untranslated region of COB mRNA identifies components of general pathways for mitochondrial mRNA processing and decay in Saccharomyces cerevisiae.</title>
        <authorList>
            <person name="Chen W."/>
            <person name="Islas-Osuna M.A."/>
            <person name="Dieckmann C.L."/>
        </authorList>
    </citation>
    <scope>FUNCTION</scope>
</reference>
<reference key="7">
    <citation type="journal article" date="2003" name="Nature">
        <title>Global analysis of protein localization in budding yeast.</title>
        <authorList>
            <person name="Huh W.-K."/>
            <person name="Falvo J.V."/>
            <person name="Gerke L.C."/>
            <person name="Carroll A.S."/>
            <person name="Howson R.W."/>
            <person name="Weissman J.S."/>
            <person name="O'Shea E.K."/>
        </authorList>
    </citation>
    <scope>SUBCELLULAR LOCATION [LARGE SCALE ANALYSIS]</scope>
</reference>
<reference key="8">
    <citation type="journal article" date="2005" name="Genetics">
        <title>CBT1 interacts genetically with CBP1 and the mitochondrially encoded cytochrome b gene and is required to stabilize the mature cytochrome b mRNA of Saccharomyces cerevisiae.</title>
        <authorList>
            <person name="Ellis T.P."/>
            <person name="Schonauer M.S."/>
            <person name="Dieckmann C.L."/>
        </authorList>
    </citation>
    <scope>FUNCTION</scope>
</reference>
<evidence type="ECO:0000269" key="1">
    <source>
    </source>
</evidence>
<evidence type="ECO:0000269" key="2">
    <source>
    </source>
</evidence>
<evidence type="ECO:0000269" key="3">
    <source>
    </source>
</evidence>
<evidence type="ECO:0000269" key="4">
    <source>
    </source>
</evidence>
<evidence type="ECO:0000269" key="5">
    <source>
    </source>
</evidence>
<evidence type="ECO:0000305" key="6"/>
<gene>
    <name type="primary">CBT1</name>
    <name type="synonym">SOC1</name>
    <name type="ordered locus">YKL208W</name>
</gene>
<comment type="function">
    <text evidence="1 3 4 5">Involved in 5'-end processing of mitochondrial COB, 15S rRNA, and RPM1 transcript. May also have a role in 3'-end processing of the COB pre-mRNA.</text>
</comment>
<comment type="subcellular location">
    <subcellularLocation>
        <location evidence="2">Mitochondrion</location>
    </subcellularLocation>
</comment>
<feature type="chain" id="PRO_0000203131" description="Cytochrome b termination protein 1">
    <location>
        <begin position="1"/>
        <end position="271"/>
    </location>
</feature>
<feature type="sequence conflict" description="In Ref. 3; AAS56721." evidence="6" ref="3">
    <original>R</original>
    <variation>Q</variation>
    <location>
        <position position="270"/>
    </location>
</feature>
<organism>
    <name type="scientific">Saccharomyces cerevisiae (strain ATCC 204508 / S288c)</name>
    <name type="common">Baker's yeast</name>
    <dbReference type="NCBI Taxonomy" id="559292"/>
    <lineage>
        <taxon>Eukaryota</taxon>
        <taxon>Fungi</taxon>
        <taxon>Dikarya</taxon>
        <taxon>Ascomycota</taxon>
        <taxon>Saccharomycotina</taxon>
        <taxon>Saccharomycetes</taxon>
        <taxon>Saccharomycetales</taxon>
        <taxon>Saccharomycetaceae</taxon>
        <taxon>Saccharomyces</taxon>
    </lineage>
</organism>
<keyword id="KW-0496">Mitochondrion</keyword>
<keyword id="KW-0507">mRNA processing</keyword>
<keyword id="KW-1185">Reference proteome</keyword>
<keyword id="KW-0690">Ribosome biogenesis</keyword>
<keyword id="KW-0698">rRNA processing</keyword>
<name>CBT1_YEAST</name>
<sequence>MVSYGSHSSEVSKVLKTPKFVLRYGNVSSKQRFALKRKINYKLRESKYQEYLNEYNTFVLYDWENSGAGSLVDSSYNLPSLWKEFITEGISKGAINDKLPTVFMKRKLTNSALGHCLGLDFLTDPSESEHEYRCMFQTVQDIPSLSQLILFNSMPNVPVRLKLHTIGININFGCKRSLISNGGDQDTEMSEAVSYIQPLLEESSRMYRNLNYWKLLKIARNNKKDEPLDQSTRIKSQVKLLLSQLATNRITSPSVTDHGGHNWLIFTRRRL</sequence>